<keyword id="KW-0963">Cytoplasm</keyword>
<keyword id="KW-0489">Methyltransferase</keyword>
<keyword id="KW-1185">Reference proteome</keyword>
<keyword id="KW-0698">rRNA processing</keyword>
<keyword id="KW-0949">S-adenosyl-L-methionine</keyword>
<keyword id="KW-0808">Transferase</keyword>
<gene>
    <name evidence="1" type="primary">rlmE</name>
    <name evidence="1" type="synonym">ftsJ</name>
    <name evidence="1" type="synonym">rrmJ</name>
    <name type="ordered locus">AHA_3313</name>
</gene>
<evidence type="ECO:0000255" key="1">
    <source>
        <dbReference type="HAMAP-Rule" id="MF_01547"/>
    </source>
</evidence>
<name>RLME_AERHH</name>
<reference key="1">
    <citation type="journal article" date="2006" name="J. Bacteriol.">
        <title>Genome sequence of Aeromonas hydrophila ATCC 7966T: jack of all trades.</title>
        <authorList>
            <person name="Seshadri R."/>
            <person name="Joseph S.W."/>
            <person name="Chopra A.K."/>
            <person name="Sha J."/>
            <person name="Shaw J."/>
            <person name="Graf J."/>
            <person name="Haft D.H."/>
            <person name="Wu M."/>
            <person name="Ren Q."/>
            <person name="Rosovitz M.J."/>
            <person name="Madupu R."/>
            <person name="Tallon L."/>
            <person name="Kim M."/>
            <person name="Jin S."/>
            <person name="Vuong H."/>
            <person name="Stine O.C."/>
            <person name="Ali A."/>
            <person name="Horneman A.J."/>
            <person name="Heidelberg J.F."/>
        </authorList>
    </citation>
    <scope>NUCLEOTIDE SEQUENCE [LARGE SCALE GENOMIC DNA]</scope>
    <source>
        <strain>ATCC 7966 / DSM 30187 / BCRC 13018 / CCUG 14551 / JCM 1027 / KCTC 2358 / NCIMB 9240 / NCTC 8049</strain>
    </source>
</reference>
<sequence length="209" mass="23288">MTQKKHSPSSTRWLKEHFDDQYVKKAQKLGLRSRAVFKIDEIQGKDKLLKPGMTVVDLGAAPGGWSQFAIDQVGDKGRVIACDILPMDSIAGVDFLQGDFREETVLGALLERVGPDKVDVVMSDMAPNMSGTQQVDQARSMYLVELALDMCNQVLRANGSFVVKVFQGEGFDIYLNEIRKLFTAVKIRKPDSSRARSREVYIVATGFKL</sequence>
<proteinExistence type="inferred from homology"/>
<accession>A0KNF1</accession>
<comment type="function">
    <text evidence="1">Specifically methylates the uridine in position 2552 of 23S rRNA at the 2'-O position of the ribose in the fully assembled 50S ribosomal subunit.</text>
</comment>
<comment type="catalytic activity">
    <reaction evidence="1">
        <text>uridine(2552) in 23S rRNA + S-adenosyl-L-methionine = 2'-O-methyluridine(2552) in 23S rRNA + S-adenosyl-L-homocysteine + H(+)</text>
        <dbReference type="Rhea" id="RHEA:42720"/>
        <dbReference type="Rhea" id="RHEA-COMP:10202"/>
        <dbReference type="Rhea" id="RHEA-COMP:10203"/>
        <dbReference type="ChEBI" id="CHEBI:15378"/>
        <dbReference type="ChEBI" id="CHEBI:57856"/>
        <dbReference type="ChEBI" id="CHEBI:59789"/>
        <dbReference type="ChEBI" id="CHEBI:65315"/>
        <dbReference type="ChEBI" id="CHEBI:74478"/>
        <dbReference type="EC" id="2.1.1.166"/>
    </reaction>
</comment>
<comment type="subcellular location">
    <subcellularLocation>
        <location evidence="1">Cytoplasm</location>
    </subcellularLocation>
</comment>
<comment type="similarity">
    <text evidence="1">Belongs to the class I-like SAM-binding methyltransferase superfamily. RNA methyltransferase RlmE family.</text>
</comment>
<feature type="chain" id="PRO_0000282720" description="Ribosomal RNA large subunit methyltransferase E">
    <location>
        <begin position="1"/>
        <end position="209"/>
    </location>
</feature>
<feature type="active site" description="Proton acceptor" evidence="1">
    <location>
        <position position="164"/>
    </location>
</feature>
<feature type="binding site" evidence="1">
    <location>
        <position position="63"/>
    </location>
    <ligand>
        <name>S-adenosyl-L-methionine</name>
        <dbReference type="ChEBI" id="CHEBI:59789"/>
    </ligand>
</feature>
<feature type="binding site" evidence="1">
    <location>
        <position position="65"/>
    </location>
    <ligand>
        <name>S-adenosyl-L-methionine</name>
        <dbReference type="ChEBI" id="CHEBI:59789"/>
    </ligand>
</feature>
<feature type="binding site" evidence="1">
    <location>
        <position position="83"/>
    </location>
    <ligand>
        <name>S-adenosyl-L-methionine</name>
        <dbReference type="ChEBI" id="CHEBI:59789"/>
    </ligand>
</feature>
<feature type="binding site" evidence="1">
    <location>
        <position position="99"/>
    </location>
    <ligand>
        <name>S-adenosyl-L-methionine</name>
        <dbReference type="ChEBI" id="CHEBI:59789"/>
    </ligand>
</feature>
<feature type="binding site" evidence="1">
    <location>
        <position position="124"/>
    </location>
    <ligand>
        <name>S-adenosyl-L-methionine</name>
        <dbReference type="ChEBI" id="CHEBI:59789"/>
    </ligand>
</feature>
<dbReference type="EC" id="2.1.1.166" evidence="1"/>
<dbReference type="EMBL" id="CP000462">
    <property type="protein sequence ID" value="ABK36606.1"/>
    <property type="molecule type" value="Genomic_DNA"/>
</dbReference>
<dbReference type="RefSeq" id="WP_011707081.1">
    <property type="nucleotide sequence ID" value="NC_008570.1"/>
</dbReference>
<dbReference type="RefSeq" id="YP_857802.1">
    <property type="nucleotide sequence ID" value="NC_008570.1"/>
</dbReference>
<dbReference type="SMR" id="A0KNF1"/>
<dbReference type="STRING" id="380703.AHA_3313"/>
<dbReference type="EnsemblBacteria" id="ABK36606">
    <property type="protein sequence ID" value="ABK36606"/>
    <property type="gene ID" value="AHA_3313"/>
</dbReference>
<dbReference type="GeneID" id="4489893"/>
<dbReference type="KEGG" id="aha:AHA_3313"/>
<dbReference type="PATRIC" id="fig|380703.7.peg.3307"/>
<dbReference type="eggNOG" id="COG0293">
    <property type="taxonomic scope" value="Bacteria"/>
</dbReference>
<dbReference type="HOGENOM" id="CLU_009422_4_0_6"/>
<dbReference type="OrthoDB" id="9790080at2"/>
<dbReference type="Proteomes" id="UP000000756">
    <property type="component" value="Chromosome"/>
</dbReference>
<dbReference type="GO" id="GO:0005737">
    <property type="term" value="C:cytoplasm"/>
    <property type="evidence" value="ECO:0007669"/>
    <property type="project" value="UniProtKB-SubCell"/>
</dbReference>
<dbReference type="GO" id="GO:0008650">
    <property type="term" value="F:rRNA (uridine-2'-O-)-methyltransferase activity"/>
    <property type="evidence" value="ECO:0007669"/>
    <property type="project" value="UniProtKB-UniRule"/>
</dbReference>
<dbReference type="CDD" id="cd02440">
    <property type="entry name" value="AdoMet_MTases"/>
    <property type="match status" value="1"/>
</dbReference>
<dbReference type="FunFam" id="3.40.50.150:FF:000005">
    <property type="entry name" value="Ribosomal RNA large subunit methyltransferase E"/>
    <property type="match status" value="1"/>
</dbReference>
<dbReference type="Gene3D" id="3.40.50.150">
    <property type="entry name" value="Vaccinia Virus protein VP39"/>
    <property type="match status" value="1"/>
</dbReference>
<dbReference type="HAMAP" id="MF_01547">
    <property type="entry name" value="RNA_methyltr_E"/>
    <property type="match status" value="1"/>
</dbReference>
<dbReference type="InterPro" id="IPR050082">
    <property type="entry name" value="RNA_methyltr_RlmE"/>
</dbReference>
<dbReference type="InterPro" id="IPR002877">
    <property type="entry name" value="RNA_MeTrfase_FtsJ_dom"/>
</dbReference>
<dbReference type="InterPro" id="IPR015507">
    <property type="entry name" value="rRNA-MeTfrase_E"/>
</dbReference>
<dbReference type="InterPro" id="IPR004512">
    <property type="entry name" value="rRNA_MeTrfase_gammaproteobac"/>
</dbReference>
<dbReference type="InterPro" id="IPR029063">
    <property type="entry name" value="SAM-dependent_MTases_sf"/>
</dbReference>
<dbReference type="NCBIfam" id="NF008390">
    <property type="entry name" value="PRK11188.1"/>
    <property type="match status" value="1"/>
</dbReference>
<dbReference type="NCBIfam" id="TIGR00438">
    <property type="entry name" value="rrmJ"/>
    <property type="match status" value="1"/>
</dbReference>
<dbReference type="PANTHER" id="PTHR10920">
    <property type="entry name" value="RIBOSOMAL RNA METHYLTRANSFERASE"/>
    <property type="match status" value="1"/>
</dbReference>
<dbReference type="PANTHER" id="PTHR10920:SF18">
    <property type="entry name" value="RRNA METHYLTRANSFERASE 2, MITOCHONDRIAL"/>
    <property type="match status" value="1"/>
</dbReference>
<dbReference type="Pfam" id="PF01728">
    <property type="entry name" value="FtsJ"/>
    <property type="match status" value="1"/>
</dbReference>
<dbReference type="PIRSF" id="PIRSF005461">
    <property type="entry name" value="23S_rRNA_mtase"/>
    <property type="match status" value="1"/>
</dbReference>
<dbReference type="SUPFAM" id="SSF53335">
    <property type="entry name" value="S-adenosyl-L-methionine-dependent methyltransferases"/>
    <property type="match status" value="1"/>
</dbReference>
<organism>
    <name type="scientific">Aeromonas hydrophila subsp. hydrophila (strain ATCC 7966 / DSM 30187 / BCRC 13018 / CCUG 14551 / JCM 1027 / KCTC 2358 / NCIMB 9240 / NCTC 8049)</name>
    <dbReference type="NCBI Taxonomy" id="380703"/>
    <lineage>
        <taxon>Bacteria</taxon>
        <taxon>Pseudomonadati</taxon>
        <taxon>Pseudomonadota</taxon>
        <taxon>Gammaproteobacteria</taxon>
        <taxon>Aeromonadales</taxon>
        <taxon>Aeromonadaceae</taxon>
        <taxon>Aeromonas</taxon>
    </lineage>
</organism>
<protein>
    <recommendedName>
        <fullName evidence="1">Ribosomal RNA large subunit methyltransferase E</fullName>
        <ecNumber evidence="1">2.1.1.166</ecNumber>
    </recommendedName>
    <alternativeName>
        <fullName evidence="1">23S rRNA Um2552 methyltransferase</fullName>
    </alternativeName>
    <alternativeName>
        <fullName evidence="1">rRNA (uridine-2'-O-)-methyltransferase</fullName>
    </alternativeName>
</protein>